<keyword id="KW-0320">Glycogen biosynthesis</keyword>
<keyword id="KW-0328">Glycosyltransferase</keyword>
<keyword id="KW-0808">Transferase</keyword>
<dbReference type="EC" id="2.4.1.21" evidence="1"/>
<dbReference type="EMBL" id="CP000247">
    <property type="protein sequence ID" value="ABG71499.1"/>
    <property type="molecule type" value="Genomic_DNA"/>
</dbReference>
<dbReference type="RefSeq" id="WP_001197646.1">
    <property type="nucleotide sequence ID" value="NC_008253.1"/>
</dbReference>
<dbReference type="SMR" id="Q0TC30"/>
<dbReference type="CAZy" id="GT5">
    <property type="family name" value="Glycosyltransferase Family 5"/>
</dbReference>
<dbReference type="GeneID" id="75202274"/>
<dbReference type="KEGG" id="ecp:ECP_3523"/>
<dbReference type="HOGENOM" id="CLU_009583_18_2_6"/>
<dbReference type="UniPathway" id="UPA00164"/>
<dbReference type="Proteomes" id="UP000009182">
    <property type="component" value="Chromosome"/>
</dbReference>
<dbReference type="GO" id="GO:0005829">
    <property type="term" value="C:cytosol"/>
    <property type="evidence" value="ECO:0007669"/>
    <property type="project" value="TreeGrafter"/>
</dbReference>
<dbReference type="GO" id="GO:0009011">
    <property type="term" value="F:alpha-1,4-glucan glucosyltransferase (ADP-glucose donor) activity"/>
    <property type="evidence" value="ECO:0007669"/>
    <property type="project" value="UniProtKB-UniRule"/>
</dbReference>
<dbReference type="GO" id="GO:0004373">
    <property type="term" value="F:alpha-1,4-glucan glucosyltransferase (UDP-glucose donor) activity"/>
    <property type="evidence" value="ECO:0007669"/>
    <property type="project" value="InterPro"/>
</dbReference>
<dbReference type="GO" id="GO:0005978">
    <property type="term" value="P:glycogen biosynthetic process"/>
    <property type="evidence" value="ECO:0007669"/>
    <property type="project" value="UniProtKB-UniRule"/>
</dbReference>
<dbReference type="CDD" id="cd03791">
    <property type="entry name" value="GT5_Glycogen_synthase_DULL1-like"/>
    <property type="match status" value="1"/>
</dbReference>
<dbReference type="FunFam" id="3.40.50.2000:FF:000008">
    <property type="entry name" value="Glycogen synthase"/>
    <property type="match status" value="1"/>
</dbReference>
<dbReference type="FunFam" id="3.40.50.2000:FF:000011">
    <property type="entry name" value="Glycogen synthase"/>
    <property type="match status" value="1"/>
</dbReference>
<dbReference type="Gene3D" id="3.40.50.2000">
    <property type="entry name" value="Glycogen Phosphorylase B"/>
    <property type="match status" value="2"/>
</dbReference>
<dbReference type="HAMAP" id="MF_00484">
    <property type="entry name" value="Glycogen_synth"/>
    <property type="match status" value="1"/>
</dbReference>
<dbReference type="InterPro" id="IPR001296">
    <property type="entry name" value="Glyco_trans_1"/>
</dbReference>
<dbReference type="InterPro" id="IPR011835">
    <property type="entry name" value="GS/SS"/>
</dbReference>
<dbReference type="InterPro" id="IPR013534">
    <property type="entry name" value="Starch_synth_cat_dom"/>
</dbReference>
<dbReference type="NCBIfam" id="TIGR02095">
    <property type="entry name" value="glgA"/>
    <property type="match status" value="1"/>
</dbReference>
<dbReference type="NCBIfam" id="NF001899">
    <property type="entry name" value="PRK00654.1-2"/>
    <property type="match status" value="1"/>
</dbReference>
<dbReference type="PANTHER" id="PTHR45825:SF11">
    <property type="entry name" value="ALPHA AMYLASE DOMAIN-CONTAINING PROTEIN"/>
    <property type="match status" value="1"/>
</dbReference>
<dbReference type="PANTHER" id="PTHR45825">
    <property type="entry name" value="GRANULE-BOUND STARCH SYNTHASE 1, CHLOROPLASTIC/AMYLOPLASTIC"/>
    <property type="match status" value="1"/>
</dbReference>
<dbReference type="Pfam" id="PF08323">
    <property type="entry name" value="Glyco_transf_5"/>
    <property type="match status" value="1"/>
</dbReference>
<dbReference type="Pfam" id="PF00534">
    <property type="entry name" value="Glycos_transf_1"/>
    <property type="match status" value="1"/>
</dbReference>
<dbReference type="SUPFAM" id="SSF53756">
    <property type="entry name" value="UDP-Glycosyltransferase/glycogen phosphorylase"/>
    <property type="match status" value="1"/>
</dbReference>
<gene>
    <name evidence="1" type="primary">glgA</name>
    <name type="ordered locus">ECP_3523</name>
</gene>
<evidence type="ECO:0000255" key="1">
    <source>
        <dbReference type="HAMAP-Rule" id="MF_00484"/>
    </source>
</evidence>
<sequence length="477" mass="52822">MQVLHVCSEMFPLLKTGGLADVIGALPAAQIADGVDARVLLPAFPDIRRGVTDAQVVSRRDTFAGHITLLFGHYNGVGIYLIDAPHLYDRPGSPYHDTNLFAYTDNVLRFALLGWVGAEMASGLDPFWRPDVVHAHDWHAGLAPAYLAARGRPAKSVFTVHNLAYQGMFYAHHMNDIQLPWSFFNIHGLEFNGQISFLKAGLYYADHITAVSPTYAREITEPQFAYGMEGLLQQRHREGRLSGVLNGVDEKIWSPETDLLLASRYTRDTLEDKAENKRQLQIAMGLKVDDKVPLFAVVSRLTSQKGLDLVLEALPGLLEQGGQLALLGAGDPVLQEGFLAAAAEYPGQVGVQIGYHEAFSHRIMGGADVILVPSRFEPCGLTQLYGLKYGTLPLVRRTGGLADTVSDCSLENLADGVASGFVFEDSNAWSLLRAIRRAFVLWSRPSLWRFVQRQAMAMDFSWQVAAKSYRELYYRLK</sequence>
<feature type="chain" id="PRO_1000014352" description="Glycogen synthase">
    <location>
        <begin position="1"/>
        <end position="477"/>
    </location>
</feature>
<feature type="binding site" evidence="1">
    <location>
        <position position="15"/>
    </location>
    <ligand>
        <name>ADP-alpha-D-glucose</name>
        <dbReference type="ChEBI" id="CHEBI:57498"/>
    </ligand>
</feature>
<accession>Q0TC30</accession>
<proteinExistence type="inferred from homology"/>
<protein>
    <recommendedName>
        <fullName evidence="1">Glycogen synthase</fullName>
        <ecNumber evidence="1">2.4.1.21</ecNumber>
    </recommendedName>
    <alternativeName>
        <fullName evidence="1">Starch [bacterial glycogen] synthase</fullName>
    </alternativeName>
</protein>
<organism>
    <name type="scientific">Escherichia coli O6:K15:H31 (strain 536 / UPEC)</name>
    <dbReference type="NCBI Taxonomy" id="362663"/>
    <lineage>
        <taxon>Bacteria</taxon>
        <taxon>Pseudomonadati</taxon>
        <taxon>Pseudomonadota</taxon>
        <taxon>Gammaproteobacteria</taxon>
        <taxon>Enterobacterales</taxon>
        <taxon>Enterobacteriaceae</taxon>
        <taxon>Escherichia</taxon>
    </lineage>
</organism>
<reference key="1">
    <citation type="journal article" date="2006" name="Mol. Microbiol.">
        <title>Role of pathogenicity island-associated integrases in the genome plasticity of uropathogenic Escherichia coli strain 536.</title>
        <authorList>
            <person name="Hochhut B."/>
            <person name="Wilde C."/>
            <person name="Balling G."/>
            <person name="Middendorf B."/>
            <person name="Dobrindt U."/>
            <person name="Brzuszkiewicz E."/>
            <person name="Gottschalk G."/>
            <person name="Carniel E."/>
            <person name="Hacker J."/>
        </authorList>
    </citation>
    <scope>NUCLEOTIDE SEQUENCE [LARGE SCALE GENOMIC DNA]</scope>
    <source>
        <strain>536 / UPEC</strain>
    </source>
</reference>
<comment type="function">
    <text evidence="1">Synthesizes alpha-1,4-glucan chains using ADP-glucose.</text>
</comment>
<comment type="catalytic activity">
    <reaction evidence="1">
        <text>[(1-&gt;4)-alpha-D-glucosyl](n) + ADP-alpha-D-glucose = [(1-&gt;4)-alpha-D-glucosyl](n+1) + ADP + H(+)</text>
        <dbReference type="Rhea" id="RHEA:18189"/>
        <dbReference type="Rhea" id="RHEA-COMP:9584"/>
        <dbReference type="Rhea" id="RHEA-COMP:9587"/>
        <dbReference type="ChEBI" id="CHEBI:15378"/>
        <dbReference type="ChEBI" id="CHEBI:15444"/>
        <dbReference type="ChEBI" id="CHEBI:57498"/>
        <dbReference type="ChEBI" id="CHEBI:456216"/>
        <dbReference type="EC" id="2.4.1.21"/>
    </reaction>
</comment>
<comment type="pathway">
    <text evidence="1">Glycan biosynthesis; glycogen biosynthesis.</text>
</comment>
<comment type="similarity">
    <text evidence="1">Belongs to the glycosyltransferase 1 family. Bacterial/plant glycogen synthase subfamily.</text>
</comment>
<name>GLGA_ECOL5</name>